<sequence>MGDSVLSAIQQTITQRKSANPSESYVAQLLHKGEDKILKKVIEEAGEVLMASKDKNPSHLVYEVADLWFHTMILLTHHDLKAEDVLDELARRQGLSGLAEKAARTES</sequence>
<comment type="catalytic activity">
    <reaction evidence="1">
        <text>1-(5-phospho-beta-D-ribosyl)-ATP + H2O = 1-(5-phospho-beta-D-ribosyl)-5'-AMP + diphosphate + H(+)</text>
        <dbReference type="Rhea" id="RHEA:22828"/>
        <dbReference type="ChEBI" id="CHEBI:15377"/>
        <dbReference type="ChEBI" id="CHEBI:15378"/>
        <dbReference type="ChEBI" id="CHEBI:33019"/>
        <dbReference type="ChEBI" id="CHEBI:59457"/>
        <dbReference type="ChEBI" id="CHEBI:73183"/>
        <dbReference type="EC" id="3.6.1.31"/>
    </reaction>
</comment>
<comment type="pathway">
    <text evidence="1">Amino-acid biosynthesis; L-histidine biosynthesis; L-histidine from 5-phospho-alpha-D-ribose 1-diphosphate: step 2/9.</text>
</comment>
<comment type="subcellular location">
    <subcellularLocation>
        <location evidence="1">Cytoplasm</location>
    </subcellularLocation>
</comment>
<comment type="similarity">
    <text evidence="1">Belongs to the PRA-PH family.</text>
</comment>
<proteinExistence type="inferred from homology"/>
<keyword id="KW-0028">Amino-acid biosynthesis</keyword>
<keyword id="KW-0067">ATP-binding</keyword>
<keyword id="KW-0963">Cytoplasm</keyword>
<keyword id="KW-0368">Histidine biosynthesis</keyword>
<keyword id="KW-0378">Hydrolase</keyword>
<keyword id="KW-0547">Nucleotide-binding</keyword>
<gene>
    <name evidence="1" type="primary">hisE</name>
    <name type="ordered locus">NMC0546</name>
</gene>
<feature type="chain" id="PRO_1000063363" description="Phosphoribosyl-ATP pyrophosphatase">
    <location>
        <begin position="1"/>
        <end position="107"/>
    </location>
</feature>
<dbReference type="EC" id="3.6.1.31" evidence="1"/>
<dbReference type="EMBL" id="AM421808">
    <property type="protein sequence ID" value="CAM09841.1"/>
    <property type="molecule type" value="Genomic_DNA"/>
</dbReference>
<dbReference type="RefSeq" id="WP_002217796.1">
    <property type="nucleotide sequence ID" value="NC_008767.1"/>
</dbReference>
<dbReference type="SMR" id="A1KSL1"/>
<dbReference type="KEGG" id="nmc:NMC0546"/>
<dbReference type="HOGENOM" id="CLU_123337_1_2_4"/>
<dbReference type="UniPathway" id="UPA00031">
    <property type="reaction ID" value="UER00007"/>
</dbReference>
<dbReference type="Proteomes" id="UP000002286">
    <property type="component" value="Chromosome"/>
</dbReference>
<dbReference type="GO" id="GO:0005737">
    <property type="term" value="C:cytoplasm"/>
    <property type="evidence" value="ECO:0007669"/>
    <property type="project" value="UniProtKB-SubCell"/>
</dbReference>
<dbReference type="GO" id="GO:0005524">
    <property type="term" value="F:ATP binding"/>
    <property type="evidence" value="ECO:0007669"/>
    <property type="project" value="UniProtKB-KW"/>
</dbReference>
<dbReference type="GO" id="GO:0004636">
    <property type="term" value="F:phosphoribosyl-ATP diphosphatase activity"/>
    <property type="evidence" value="ECO:0007669"/>
    <property type="project" value="UniProtKB-UniRule"/>
</dbReference>
<dbReference type="GO" id="GO:0000105">
    <property type="term" value="P:L-histidine biosynthetic process"/>
    <property type="evidence" value="ECO:0007669"/>
    <property type="project" value="UniProtKB-UniRule"/>
</dbReference>
<dbReference type="CDD" id="cd11534">
    <property type="entry name" value="NTP-PPase_HisIE_like"/>
    <property type="match status" value="1"/>
</dbReference>
<dbReference type="FunFam" id="1.10.287.1080:FF:000002">
    <property type="entry name" value="Histidine biosynthesis bifunctional protein HisIE"/>
    <property type="match status" value="1"/>
</dbReference>
<dbReference type="Gene3D" id="1.10.287.1080">
    <property type="entry name" value="MazG-like"/>
    <property type="match status" value="1"/>
</dbReference>
<dbReference type="HAMAP" id="MF_01020">
    <property type="entry name" value="HisE"/>
    <property type="match status" value="1"/>
</dbReference>
<dbReference type="InterPro" id="IPR008179">
    <property type="entry name" value="HisE"/>
</dbReference>
<dbReference type="InterPro" id="IPR021130">
    <property type="entry name" value="PRib-ATP_PPHydrolase-like"/>
</dbReference>
<dbReference type="NCBIfam" id="TIGR03188">
    <property type="entry name" value="histidine_hisI"/>
    <property type="match status" value="1"/>
</dbReference>
<dbReference type="NCBIfam" id="NF001611">
    <property type="entry name" value="PRK00400.1-3"/>
    <property type="match status" value="1"/>
</dbReference>
<dbReference type="PANTHER" id="PTHR42945">
    <property type="entry name" value="HISTIDINE BIOSYNTHESIS BIFUNCTIONAL PROTEIN"/>
    <property type="match status" value="1"/>
</dbReference>
<dbReference type="PANTHER" id="PTHR42945:SF9">
    <property type="entry name" value="HISTIDINE BIOSYNTHESIS BIFUNCTIONAL PROTEIN HISIE"/>
    <property type="match status" value="1"/>
</dbReference>
<dbReference type="Pfam" id="PF01503">
    <property type="entry name" value="PRA-PH"/>
    <property type="match status" value="1"/>
</dbReference>
<dbReference type="SUPFAM" id="SSF101386">
    <property type="entry name" value="all-alpha NTP pyrophosphatases"/>
    <property type="match status" value="1"/>
</dbReference>
<name>HIS2_NEIMF</name>
<accession>A1KSL1</accession>
<evidence type="ECO:0000255" key="1">
    <source>
        <dbReference type="HAMAP-Rule" id="MF_01020"/>
    </source>
</evidence>
<protein>
    <recommendedName>
        <fullName evidence="1">Phosphoribosyl-ATP pyrophosphatase</fullName>
        <shortName evidence="1">PRA-PH</shortName>
        <ecNumber evidence="1">3.6.1.31</ecNumber>
    </recommendedName>
</protein>
<reference key="1">
    <citation type="journal article" date="2007" name="PLoS Genet.">
        <title>Meningococcal genetic variation mechanisms viewed through comparative analysis of serogroup C strain FAM18.</title>
        <authorList>
            <person name="Bentley S.D."/>
            <person name="Vernikos G.S."/>
            <person name="Snyder L.A.S."/>
            <person name="Churcher C."/>
            <person name="Arrowsmith C."/>
            <person name="Chillingworth T."/>
            <person name="Cronin A."/>
            <person name="Davis P.H."/>
            <person name="Holroyd N.E."/>
            <person name="Jagels K."/>
            <person name="Maddison M."/>
            <person name="Moule S."/>
            <person name="Rabbinowitsch E."/>
            <person name="Sharp S."/>
            <person name="Unwin L."/>
            <person name="Whitehead S."/>
            <person name="Quail M.A."/>
            <person name="Achtman M."/>
            <person name="Barrell B.G."/>
            <person name="Saunders N.J."/>
            <person name="Parkhill J."/>
        </authorList>
    </citation>
    <scope>NUCLEOTIDE SEQUENCE [LARGE SCALE GENOMIC DNA]</scope>
    <source>
        <strain>ATCC 700532 / DSM 15464 / FAM18</strain>
    </source>
</reference>
<organism>
    <name type="scientific">Neisseria meningitidis serogroup C / serotype 2a (strain ATCC 700532 / DSM 15464 / FAM18)</name>
    <dbReference type="NCBI Taxonomy" id="272831"/>
    <lineage>
        <taxon>Bacteria</taxon>
        <taxon>Pseudomonadati</taxon>
        <taxon>Pseudomonadota</taxon>
        <taxon>Betaproteobacteria</taxon>
        <taxon>Neisseriales</taxon>
        <taxon>Neisseriaceae</taxon>
        <taxon>Neisseria</taxon>
    </lineage>
</organism>